<accession>P09833</accession>
<protein>
    <recommendedName>
        <fullName evidence="1">Molybdenum import ATP-binding protein ModC</fullName>
        <ecNumber evidence="1">7.3.2.5</ecNumber>
    </recommendedName>
</protein>
<feature type="chain" id="PRO_0000092537" description="Molybdenum import ATP-binding protein ModC">
    <location>
        <begin position="1"/>
        <end position="352"/>
    </location>
</feature>
<feature type="domain" description="ABC transporter" evidence="1">
    <location>
        <begin position="1"/>
        <end position="229"/>
    </location>
</feature>
<feature type="domain" description="Mop" evidence="2">
    <location>
        <begin position="289"/>
        <end position="352"/>
    </location>
</feature>
<feature type="binding site" evidence="1">
    <location>
        <begin position="31"/>
        <end position="38"/>
    </location>
    <ligand>
        <name>ATP</name>
        <dbReference type="ChEBI" id="CHEBI:30616"/>
    </ligand>
</feature>
<feature type="sequence conflict" description="In Ref. 2; AAB06895 and 3; AAA83840." evidence="3" ref="2 3">
    <original>PHYAMTA</original>
    <variation>SALRDDR</variation>
    <location>
        <begin position="244"/>
        <end position="250"/>
    </location>
</feature>
<feature type="sequence conflict" description="In Ref. 3; AAA83840/AAB00837." evidence="3" ref="3">
    <original>AALRIRIQASDVSLVLQPPQQTSIRNVLRAKVVNSYDDNGQVEVELEVGGKTLWARISPWARDELAIKPGLWLYAQIKSVSITA</original>
    <variation>LRYYPHSGFRCFSWFYNRRSKPAFVTIAGKSC</variation>
    <location>
        <begin position="269"/>
        <end position="352"/>
    </location>
</feature>
<proteinExistence type="inferred from homology"/>
<reference key="1">
    <citation type="journal article" date="1995" name="J. Bacteriol.">
        <title>Genetic analysis of the modABCD (molybdate transport) operon of Escherichia coli.</title>
        <authorList>
            <person name="Maupin-Furlow J.A."/>
            <person name="Rosentel J.K."/>
            <person name="Lee J.H."/>
            <person name="Deppenmeier U."/>
            <person name="Gunsalus R.P."/>
            <person name="Shanmugam K.T."/>
        </authorList>
    </citation>
    <scope>NUCLEOTIDE SEQUENCE [GENOMIC DNA]</scope>
    <source>
        <strain>K12</strain>
    </source>
</reference>
<reference key="2">
    <citation type="journal article" date="1995" name="Microbiol. Res.">
        <title>Molecular analysis of the molybdate uptake operon, modABCD, of Escherichia coli and modR, a regulatory gene.</title>
        <authorList>
            <person name="Walkenhorst H.M."/>
            <person name="Hemschemeier S.K."/>
            <person name="Eichenlaub R."/>
        </authorList>
    </citation>
    <scope>NUCLEOTIDE SEQUENCE [GENOMIC DNA]</scope>
    <source>
        <strain>K12 / MC1000 / ATCC 39531</strain>
    </source>
</reference>
<reference key="3">
    <citation type="journal article" date="1987" name="J. Bacteriol.">
        <title>Cloning and nucleotide sequence of the chlD locus.</title>
        <authorList>
            <person name="Johann S."/>
            <person name="Hinton S.M."/>
        </authorList>
    </citation>
    <scope>NUCLEOTIDE SEQUENCE [GENOMIC DNA]</scope>
    <source>
        <strain>K12</strain>
    </source>
</reference>
<reference key="4">
    <citation type="journal article" date="1996" name="DNA Res.">
        <title>A 718-kb DNA sequence of the Escherichia coli K-12 genome corresponding to the 12.7-28.0 min region on the linkage map.</title>
        <authorList>
            <person name="Oshima T."/>
            <person name="Aiba H."/>
            <person name="Baba T."/>
            <person name="Fujita K."/>
            <person name="Hayashi K."/>
            <person name="Honjo A."/>
            <person name="Ikemoto K."/>
            <person name="Inada T."/>
            <person name="Itoh T."/>
            <person name="Kajihara M."/>
            <person name="Kanai K."/>
            <person name="Kashimoto K."/>
            <person name="Kimura S."/>
            <person name="Kitagawa M."/>
            <person name="Makino K."/>
            <person name="Masuda S."/>
            <person name="Miki T."/>
            <person name="Mizobuchi K."/>
            <person name="Mori H."/>
            <person name="Motomura K."/>
            <person name="Nakamura Y."/>
            <person name="Nashimoto H."/>
            <person name="Nishio Y."/>
            <person name="Saito N."/>
            <person name="Sampei G."/>
            <person name="Seki Y."/>
            <person name="Tagami H."/>
            <person name="Takemoto K."/>
            <person name="Wada C."/>
            <person name="Yamamoto Y."/>
            <person name="Yano M."/>
            <person name="Horiuchi T."/>
        </authorList>
    </citation>
    <scope>NUCLEOTIDE SEQUENCE [LARGE SCALE GENOMIC DNA]</scope>
    <source>
        <strain>K12 / W3110 / ATCC 27325 / DSM 5911</strain>
    </source>
</reference>
<reference key="5">
    <citation type="journal article" date="1997" name="Science">
        <title>The complete genome sequence of Escherichia coli K-12.</title>
        <authorList>
            <person name="Blattner F.R."/>
            <person name="Plunkett G. III"/>
            <person name="Bloch C.A."/>
            <person name="Perna N.T."/>
            <person name="Burland V."/>
            <person name="Riley M."/>
            <person name="Collado-Vides J."/>
            <person name="Glasner J.D."/>
            <person name="Rode C.K."/>
            <person name="Mayhew G.F."/>
            <person name="Gregor J."/>
            <person name="Davis N.W."/>
            <person name="Kirkpatrick H.A."/>
            <person name="Goeden M.A."/>
            <person name="Rose D.J."/>
            <person name="Mau B."/>
            <person name="Shao Y."/>
        </authorList>
    </citation>
    <scope>NUCLEOTIDE SEQUENCE [LARGE SCALE GENOMIC DNA]</scope>
    <source>
        <strain>K12 / MG1655 / ATCC 47076</strain>
    </source>
</reference>
<reference key="6">
    <citation type="journal article" date="2006" name="Mol. Syst. Biol.">
        <title>Highly accurate genome sequences of Escherichia coli K-12 strains MG1655 and W3110.</title>
        <authorList>
            <person name="Hayashi K."/>
            <person name="Morooka N."/>
            <person name="Yamamoto Y."/>
            <person name="Fujita K."/>
            <person name="Isono K."/>
            <person name="Choi S."/>
            <person name="Ohtsubo E."/>
            <person name="Baba T."/>
            <person name="Wanner B.L."/>
            <person name="Mori H."/>
            <person name="Horiuchi T."/>
        </authorList>
    </citation>
    <scope>NUCLEOTIDE SEQUENCE [LARGE SCALE GENOMIC DNA]</scope>
    <source>
        <strain>K12 / W3110 / ATCC 27325 / DSM 5911</strain>
    </source>
</reference>
<organism>
    <name type="scientific">Escherichia coli (strain K12)</name>
    <dbReference type="NCBI Taxonomy" id="83333"/>
    <lineage>
        <taxon>Bacteria</taxon>
        <taxon>Pseudomonadati</taxon>
        <taxon>Pseudomonadota</taxon>
        <taxon>Gammaproteobacteria</taxon>
        <taxon>Enterobacterales</taxon>
        <taxon>Enterobacteriaceae</taxon>
        <taxon>Escherichia</taxon>
    </lineage>
</organism>
<comment type="function">
    <text evidence="1">Part of the ABC transporter complex ModABC involved in molybdenum import. Responsible for energy coupling to the transport system.</text>
</comment>
<comment type="catalytic activity">
    <reaction evidence="1">
        <text>molybdate(out) + ATP + H2O = molybdate(in) + ADP + phosphate + H(+)</text>
        <dbReference type="Rhea" id="RHEA:22020"/>
        <dbReference type="ChEBI" id="CHEBI:15377"/>
        <dbReference type="ChEBI" id="CHEBI:15378"/>
        <dbReference type="ChEBI" id="CHEBI:30616"/>
        <dbReference type="ChEBI" id="CHEBI:36264"/>
        <dbReference type="ChEBI" id="CHEBI:43474"/>
        <dbReference type="ChEBI" id="CHEBI:456216"/>
        <dbReference type="EC" id="7.3.2.5"/>
    </reaction>
</comment>
<comment type="subunit">
    <text evidence="1">The complex is composed of two ATP-binding proteins (ModC), two transmembrane proteins (ModB) and a solute-binding protein (ModA).</text>
</comment>
<comment type="subcellular location">
    <subcellularLocation>
        <location>Cell inner membrane</location>
        <topology>Peripheral membrane protein</topology>
    </subcellularLocation>
</comment>
<comment type="similarity">
    <text evidence="1">Belongs to the ABC transporter superfamily. Molybdate importer (TC 3.A.1.8) family.</text>
</comment>
<evidence type="ECO:0000255" key="1">
    <source>
        <dbReference type="HAMAP-Rule" id="MF_01705"/>
    </source>
</evidence>
<evidence type="ECO:0000255" key="2">
    <source>
        <dbReference type="PROSITE-ProRule" id="PRU01213"/>
    </source>
</evidence>
<evidence type="ECO:0000305" key="3"/>
<gene>
    <name evidence="1" type="primary">modC</name>
    <name type="synonym">chlD</name>
    <name type="synonym">narD</name>
    <name type="ordered locus">b0765</name>
    <name type="ordered locus">JW0748</name>
</gene>
<name>MODC_ECOLI</name>
<sequence length="352" mass="39102">MLELNFSQTLGNHCLTINETLPANGITAIFGVSGAGKTSLINAISGLTRPQKGRIVLNGRVLNDAEKGICLTPEKRRVGYVFQDARLFPHYKVRGNLRYGMSKSMVDQFDKLVALLGIEPLLDRLPGSLSGGEKQRVAIGRALLTAPELLLLDEPLASLDIPRKRELLPYLQRLTREINIPMLYVSHSLDEILHLADRVMVLENGQVKAFGALEEVWGSSVMNPWLPKEQQSSILKVTVLEHHPHYAMTALALGDQHLWVNKLDEPLQAALRIRIQASDVSLVLQPPQQTSIRNVLRAKVVNSYDDNGQVEVELEVGGKTLWARISPWARDELAIKPGLWLYAQIKSVSITA</sequence>
<keyword id="KW-0067">ATP-binding</keyword>
<keyword id="KW-0997">Cell inner membrane</keyword>
<keyword id="KW-1003">Cell membrane</keyword>
<keyword id="KW-0472">Membrane</keyword>
<keyword id="KW-0500">Molybdenum</keyword>
<keyword id="KW-0547">Nucleotide-binding</keyword>
<keyword id="KW-1185">Reference proteome</keyword>
<keyword id="KW-1278">Translocase</keyword>
<keyword id="KW-0813">Transport</keyword>
<dbReference type="EC" id="7.3.2.5" evidence="1"/>
<dbReference type="EMBL" id="U27192">
    <property type="protein sequence ID" value="AAB60173.1"/>
    <property type="molecule type" value="Genomic_DNA"/>
</dbReference>
<dbReference type="EMBL" id="M16182">
    <property type="protein sequence ID" value="AAA83840.1"/>
    <property type="molecule type" value="Genomic_DNA"/>
</dbReference>
<dbReference type="EMBL" id="U07867">
    <property type="protein sequence ID" value="AAB06895.1"/>
    <property type="molecule type" value="Genomic_DNA"/>
</dbReference>
<dbReference type="EMBL" id="L34009">
    <property type="protein sequence ID" value="AAB00837.1"/>
    <property type="molecule type" value="Genomic_DNA"/>
</dbReference>
<dbReference type="EMBL" id="U00096">
    <property type="protein sequence ID" value="AAC73852.1"/>
    <property type="molecule type" value="Genomic_DNA"/>
</dbReference>
<dbReference type="EMBL" id="AP009048">
    <property type="protein sequence ID" value="BAA35429.1"/>
    <property type="molecule type" value="Genomic_DNA"/>
</dbReference>
<dbReference type="PIR" id="E64812">
    <property type="entry name" value="BVECHD"/>
</dbReference>
<dbReference type="RefSeq" id="NP_415286.1">
    <property type="nucleotide sequence ID" value="NC_000913.3"/>
</dbReference>
<dbReference type="RefSeq" id="WP_000891692.1">
    <property type="nucleotide sequence ID" value="NZ_STEB01000028.1"/>
</dbReference>
<dbReference type="SMR" id="P09833"/>
<dbReference type="BioGRID" id="4261147">
    <property type="interactions" value="10"/>
</dbReference>
<dbReference type="BioGRID" id="849738">
    <property type="interactions" value="1"/>
</dbReference>
<dbReference type="ComplexPortal" id="CPX-4342">
    <property type="entry name" value="Molybdate ABC transporter complex"/>
</dbReference>
<dbReference type="FunCoup" id="P09833">
    <property type="interactions" value="221"/>
</dbReference>
<dbReference type="IntAct" id="P09833">
    <property type="interactions" value="2"/>
</dbReference>
<dbReference type="STRING" id="511145.b0765"/>
<dbReference type="TCDB" id="3.A.1.8.1">
    <property type="family name" value="the atp-binding cassette (abc) superfamily"/>
</dbReference>
<dbReference type="jPOST" id="P09833"/>
<dbReference type="PaxDb" id="511145-b0765"/>
<dbReference type="EnsemblBacteria" id="AAC73852">
    <property type="protein sequence ID" value="AAC73852"/>
    <property type="gene ID" value="b0765"/>
</dbReference>
<dbReference type="GeneID" id="93776716"/>
<dbReference type="GeneID" id="945362"/>
<dbReference type="KEGG" id="ecj:JW0748"/>
<dbReference type="KEGG" id="eco:b0765"/>
<dbReference type="KEGG" id="ecoc:C3026_03880"/>
<dbReference type="PATRIC" id="fig|1411691.4.peg.1513"/>
<dbReference type="EchoBASE" id="EB0150"/>
<dbReference type="eggNOG" id="COG4148">
    <property type="taxonomic scope" value="Bacteria"/>
</dbReference>
<dbReference type="HOGENOM" id="CLU_000604_1_1_6"/>
<dbReference type="InParanoid" id="P09833"/>
<dbReference type="OMA" id="QWLYAQI"/>
<dbReference type="OrthoDB" id="9802264at2"/>
<dbReference type="PhylomeDB" id="P09833"/>
<dbReference type="BioCyc" id="EcoCyc:MODC-MONOMER"/>
<dbReference type="BioCyc" id="MetaCyc:MODC-MONOMER"/>
<dbReference type="PRO" id="PR:P09833"/>
<dbReference type="Proteomes" id="UP000000625">
    <property type="component" value="Chromosome"/>
</dbReference>
<dbReference type="GO" id="GO:0055052">
    <property type="term" value="C:ATP-binding cassette (ABC) transporter complex, substrate-binding subunit-containing"/>
    <property type="evidence" value="ECO:0000303"/>
    <property type="project" value="ComplexPortal"/>
</dbReference>
<dbReference type="GO" id="GO:0016020">
    <property type="term" value="C:membrane"/>
    <property type="evidence" value="ECO:0000303"/>
    <property type="project" value="ComplexPortal"/>
</dbReference>
<dbReference type="GO" id="GO:0015412">
    <property type="term" value="F:ABC-type molybdate transporter activity"/>
    <property type="evidence" value="ECO:0007669"/>
    <property type="project" value="UniProtKB-EC"/>
</dbReference>
<dbReference type="GO" id="GO:0005524">
    <property type="term" value="F:ATP binding"/>
    <property type="evidence" value="ECO:0000255"/>
    <property type="project" value="EcoCyc"/>
</dbReference>
<dbReference type="GO" id="GO:0016887">
    <property type="term" value="F:ATP hydrolysis activity"/>
    <property type="evidence" value="ECO:0007669"/>
    <property type="project" value="InterPro"/>
</dbReference>
<dbReference type="GO" id="GO:0015098">
    <property type="term" value="F:molybdate ion transmembrane transporter activity"/>
    <property type="evidence" value="ECO:0000269"/>
    <property type="project" value="EcoCyc"/>
</dbReference>
<dbReference type="GO" id="GO:0015689">
    <property type="term" value="P:molybdate ion transport"/>
    <property type="evidence" value="ECO:0000269"/>
    <property type="project" value="EcoCyc"/>
</dbReference>
<dbReference type="GO" id="GO:0070614">
    <property type="term" value="P:tungstate ion transport"/>
    <property type="evidence" value="ECO:0000303"/>
    <property type="project" value="ComplexPortal"/>
</dbReference>
<dbReference type="FunFam" id="2.40.50.100:FF:000037">
    <property type="entry name" value="Molybdenum import ATP-binding protein ModC"/>
    <property type="match status" value="1"/>
</dbReference>
<dbReference type="FunFam" id="3.40.50.300:FF:000634">
    <property type="entry name" value="Molybdenum import ATP-binding protein ModC"/>
    <property type="match status" value="1"/>
</dbReference>
<dbReference type="Gene3D" id="2.40.50.100">
    <property type="match status" value="1"/>
</dbReference>
<dbReference type="Gene3D" id="3.40.50.300">
    <property type="entry name" value="P-loop containing nucleotide triphosphate hydrolases"/>
    <property type="match status" value="1"/>
</dbReference>
<dbReference type="InterPro" id="IPR003593">
    <property type="entry name" value="AAA+_ATPase"/>
</dbReference>
<dbReference type="InterPro" id="IPR003439">
    <property type="entry name" value="ABC_transporter-like_ATP-bd"/>
</dbReference>
<dbReference type="InterPro" id="IPR017871">
    <property type="entry name" value="ABC_transporter-like_CS"/>
</dbReference>
<dbReference type="InterPro" id="IPR008995">
    <property type="entry name" value="Mo/tungstate-bd_C_term_dom"/>
</dbReference>
<dbReference type="InterPro" id="IPR011868">
    <property type="entry name" value="ModC_ABC_ATP-bd"/>
</dbReference>
<dbReference type="InterPro" id="IPR050334">
    <property type="entry name" value="Molybdenum_import_ModC"/>
</dbReference>
<dbReference type="InterPro" id="IPR004606">
    <property type="entry name" value="Mop_domain"/>
</dbReference>
<dbReference type="InterPro" id="IPR027417">
    <property type="entry name" value="P-loop_NTPase"/>
</dbReference>
<dbReference type="InterPro" id="IPR005116">
    <property type="entry name" value="Transp-assoc_OB_typ1"/>
</dbReference>
<dbReference type="NCBIfam" id="TIGR02142">
    <property type="entry name" value="modC_ABC"/>
    <property type="match status" value="1"/>
</dbReference>
<dbReference type="NCBIfam" id="TIGR00638">
    <property type="entry name" value="Mop"/>
    <property type="match status" value="1"/>
</dbReference>
<dbReference type="NCBIfam" id="NF008355">
    <property type="entry name" value="PRK11144.1"/>
    <property type="match status" value="1"/>
</dbReference>
<dbReference type="PANTHER" id="PTHR43514">
    <property type="entry name" value="ABC TRANSPORTER I FAMILY MEMBER 10"/>
    <property type="match status" value="1"/>
</dbReference>
<dbReference type="PANTHER" id="PTHR43514:SF4">
    <property type="entry name" value="ABC TRANSPORTER I FAMILY MEMBER 10"/>
    <property type="match status" value="1"/>
</dbReference>
<dbReference type="Pfam" id="PF00005">
    <property type="entry name" value="ABC_tran"/>
    <property type="match status" value="1"/>
</dbReference>
<dbReference type="Pfam" id="PF03459">
    <property type="entry name" value="TOBE"/>
    <property type="match status" value="1"/>
</dbReference>
<dbReference type="SMART" id="SM00382">
    <property type="entry name" value="AAA"/>
    <property type="match status" value="1"/>
</dbReference>
<dbReference type="SUPFAM" id="SSF50331">
    <property type="entry name" value="MOP-like"/>
    <property type="match status" value="1"/>
</dbReference>
<dbReference type="SUPFAM" id="SSF52540">
    <property type="entry name" value="P-loop containing nucleoside triphosphate hydrolases"/>
    <property type="match status" value="1"/>
</dbReference>
<dbReference type="PROSITE" id="PS00211">
    <property type="entry name" value="ABC_TRANSPORTER_1"/>
    <property type="match status" value="1"/>
</dbReference>
<dbReference type="PROSITE" id="PS50893">
    <property type="entry name" value="ABC_TRANSPORTER_2"/>
    <property type="match status" value="1"/>
</dbReference>
<dbReference type="PROSITE" id="PS51241">
    <property type="entry name" value="MODC"/>
    <property type="match status" value="1"/>
</dbReference>
<dbReference type="PROSITE" id="PS51866">
    <property type="entry name" value="MOP"/>
    <property type="match status" value="1"/>
</dbReference>